<dbReference type="EMBL" id="AE004091">
    <property type="protein sequence ID" value="AAG07267.1"/>
    <property type="molecule type" value="Genomic_DNA"/>
</dbReference>
<dbReference type="PIR" id="G83160">
    <property type="entry name" value="G83160"/>
</dbReference>
<dbReference type="RefSeq" id="NP_252569.1">
    <property type="nucleotide sequence ID" value="NC_002516.2"/>
</dbReference>
<dbReference type="RefSeq" id="WP_003092971.1">
    <property type="nucleotide sequence ID" value="NZ_QZGE01000001.1"/>
</dbReference>
<dbReference type="STRING" id="208964.PA3880"/>
<dbReference type="PaxDb" id="208964-PA3880"/>
<dbReference type="DNASU" id="878665"/>
<dbReference type="GeneID" id="878665"/>
<dbReference type="KEGG" id="pae:PA3880"/>
<dbReference type="PATRIC" id="fig|208964.12.peg.4063"/>
<dbReference type="PseudoCAP" id="PA3880"/>
<dbReference type="HOGENOM" id="CLU_143943_1_0_6"/>
<dbReference type="InParanoid" id="Q9HXD2"/>
<dbReference type="OrthoDB" id="2111735at2"/>
<dbReference type="BioCyc" id="PAER208964:G1FZ6-3952-MONOMER"/>
<dbReference type="PHI-base" id="PHI:9387"/>
<dbReference type="Proteomes" id="UP000002438">
    <property type="component" value="Chromosome"/>
</dbReference>
<dbReference type="InterPro" id="IPR014958">
    <property type="entry name" value="DGC"/>
</dbReference>
<dbReference type="Pfam" id="PF08859">
    <property type="entry name" value="DGC"/>
    <property type="match status" value="1"/>
</dbReference>
<dbReference type="PIRSF" id="PIRSF037181">
    <property type="entry name" value="DGC"/>
    <property type="match status" value="1"/>
</dbReference>
<organism>
    <name type="scientific">Pseudomonas aeruginosa (strain ATCC 15692 / DSM 22644 / CIP 104116 / JCM 14847 / LMG 12228 / 1C / PRS 101 / PAO1)</name>
    <dbReference type="NCBI Taxonomy" id="208964"/>
    <lineage>
        <taxon>Bacteria</taxon>
        <taxon>Pseudomonadati</taxon>
        <taxon>Pseudomonadota</taxon>
        <taxon>Gammaproteobacteria</taxon>
        <taxon>Pseudomonadales</taxon>
        <taxon>Pseudomonadaceae</taxon>
        <taxon>Pseudomonas</taxon>
    </lineage>
</organism>
<reference key="1">
    <citation type="journal article" date="2000" name="Nature">
        <title>Complete genome sequence of Pseudomonas aeruginosa PAO1, an opportunistic pathogen.</title>
        <authorList>
            <person name="Stover C.K."/>
            <person name="Pham X.-Q.T."/>
            <person name="Erwin A.L."/>
            <person name="Mizoguchi S.D."/>
            <person name="Warrener P."/>
            <person name="Hickey M.J."/>
            <person name="Brinkman F.S.L."/>
            <person name="Hufnagle W.O."/>
            <person name="Kowalik D.J."/>
            <person name="Lagrou M."/>
            <person name="Garber R.L."/>
            <person name="Goltry L."/>
            <person name="Tolentino E."/>
            <person name="Westbrock-Wadman S."/>
            <person name="Yuan Y."/>
            <person name="Brody L.L."/>
            <person name="Coulter S.N."/>
            <person name="Folger K.R."/>
            <person name="Kas A."/>
            <person name="Larbig K."/>
            <person name="Lim R.M."/>
            <person name="Smith K.A."/>
            <person name="Spencer D.H."/>
            <person name="Wong G.K.-S."/>
            <person name="Wu Z."/>
            <person name="Paulsen I.T."/>
            <person name="Reizer J."/>
            <person name="Saier M.H. Jr."/>
            <person name="Hancock R.E.W."/>
            <person name="Lory S."/>
            <person name="Olson M.V."/>
        </authorList>
    </citation>
    <scope>NUCLEOTIDE SEQUENCE [LARGE SCALE GENOMIC DNA]</scope>
    <source>
        <strain>ATCC 15692 / DSM 22644 / CIP 104116 / JCM 14847 / LMG 12228 / 1C / PRS 101 / PAO1</strain>
    </source>
</reference>
<reference key="2">
    <citation type="journal article" date="2019" name="MBio">
        <title>Pseudomonas aeruginosa regulatory protein AnvM controls pathogenicity in anaerobic environments and impacts host defense.</title>
        <authorList>
            <person name="Zhang Y."/>
            <person name="Zhou C.M."/>
            <person name="Pu Q."/>
            <person name="Wu Q."/>
            <person name="Tan S."/>
            <person name="Shao X."/>
            <person name="Zhang W."/>
            <person name="Xie Y."/>
            <person name="Li R."/>
            <person name="Yu X.J."/>
            <person name="Wang R."/>
            <person name="Zhang L."/>
            <person name="Wu M."/>
            <person name="Deng X."/>
        </authorList>
    </citation>
    <scope>FUNCTION</scope>
    <scope>DISRUPTION PHENOTYPE</scope>
</reference>
<proteinExistence type="predicted"/>
<gene>
    <name evidence="2" type="primary">anvM</name>
    <name type="ordered locus">PA3880</name>
</gene>
<comment type="function">
    <text evidence="1">Plays an essential role by modulating the expression of hundreds of genes including quorum sensing system genes and oxidative stress resistance genes under both aerobic and anaerobic conditions.</text>
</comment>
<comment type="disruption phenotype">
    <text evidence="1">Deletion decreases host innate immune response. Diminishes bacterial phagocytosis by host alveolar macrophages.</text>
</comment>
<accession>Q9HXD2</accession>
<evidence type="ECO:0000269" key="1">
    <source>
    </source>
</evidence>
<evidence type="ECO:0000303" key="2">
    <source>
    </source>
</evidence>
<sequence length="131" mass="14380">MMFERSPDDPLPLVYACSGCSNVAQLANDLALRLDRARLAEMSCIAGVGGDVPLLVRRARSGRPILALDGCPLHCVKGCLARHEVVPTLHLTLSEHGLKKRYGEDCEAQDAERLFVELERLLTPGGKRRCE</sequence>
<protein>
    <recommendedName>
        <fullName evidence="2">Anaerobic and virulence modulator AnvM</fullName>
    </recommendedName>
</protein>
<name>ANVM_PSEAE</name>
<keyword id="KW-1185">Reference proteome</keyword>
<keyword id="KW-0843">Virulence</keyword>
<feature type="chain" id="PRO_0000448534" description="Anaerobic and virulence modulator AnvM">
    <location>
        <begin position="1"/>
        <end position="131"/>
    </location>
</feature>